<sequence length="390" mass="45127">MDHSNREKDDRQRTTKTMAQRNTHCSRPSGTSTSSGVLMVGPNFRVGKKIGCGNFGELRLGKNLYTNEYVAIKLEPIKSRAPQLHLEYRFYKQLGSAGEGLPQVYYFGPCGKYNAMVLELLGPSLEDLFDLCDRTFTLKTVLMIAIQLLSRMEYVHSKNLIYRDVKPENFLIGRQGNKKEHVIHIIDFGLAKEYIDPETKKHIPYREHKSLTGTARYMSINTHLGKEQSRRDDLEALGHMFMYFLRGSLPWQGLKADTLKERYQKIGDTKRSTPIEALCENFPEEMMTYLRYVRRLDFFEKPDYEYLRNLFTDLFERKGYTFDYAYDWVGRPIPTPVGSVHVDSGASAITRESHTHRDRPSQQQPLRNQPRSLTAEWFVLAPLSHPPAPT</sequence>
<evidence type="ECO:0000250" key="1"/>
<evidence type="ECO:0000250" key="2">
    <source>
        <dbReference type="UniProtKB" id="Q9HCP0"/>
    </source>
</evidence>
<evidence type="ECO:0000255" key="3">
    <source>
        <dbReference type="PROSITE-ProRule" id="PRU00159"/>
    </source>
</evidence>
<evidence type="ECO:0000255" key="4">
    <source>
        <dbReference type="PROSITE-ProRule" id="PRU10027"/>
    </source>
</evidence>
<evidence type="ECO:0000256" key="5">
    <source>
        <dbReference type="SAM" id="MobiDB-lite"/>
    </source>
</evidence>
<evidence type="ECO:0000305" key="6"/>
<accession>Q62761</accession>
<comment type="function">
    <text evidence="1">Serine/threonine-protein kinase. Casein kinases are operationally defined by their preferential utilization of acidic proteins such as caseins as substrates. It can phosphorylate a large number of proteins. Participates in Wnt signaling. Regulates fast synaptic transmission mediated by glutamate. Phosphorylates CLSPN (By similarity).</text>
</comment>
<comment type="catalytic activity">
    <reaction>
        <text>L-seryl-[protein] + ATP = O-phospho-L-seryl-[protein] + ADP + H(+)</text>
        <dbReference type="Rhea" id="RHEA:17989"/>
        <dbReference type="Rhea" id="RHEA-COMP:9863"/>
        <dbReference type="Rhea" id="RHEA-COMP:11604"/>
        <dbReference type="ChEBI" id="CHEBI:15378"/>
        <dbReference type="ChEBI" id="CHEBI:29999"/>
        <dbReference type="ChEBI" id="CHEBI:30616"/>
        <dbReference type="ChEBI" id="CHEBI:83421"/>
        <dbReference type="ChEBI" id="CHEBI:456216"/>
        <dbReference type="EC" id="2.7.11.1"/>
    </reaction>
</comment>
<comment type="catalytic activity">
    <reaction>
        <text>L-threonyl-[protein] + ATP = O-phospho-L-threonyl-[protein] + ADP + H(+)</text>
        <dbReference type="Rhea" id="RHEA:46608"/>
        <dbReference type="Rhea" id="RHEA-COMP:11060"/>
        <dbReference type="Rhea" id="RHEA-COMP:11605"/>
        <dbReference type="ChEBI" id="CHEBI:15378"/>
        <dbReference type="ChEBI" id="CHEBI:30013"/>
        <dbReference type="ChEBI" id="CHEBI:30616"/>
        <dbReference type="ChEBI" id="CHEBI:61977"/>
        <dbReference type="ChEBI" id="CHEBI:456216"/>
        <dbReference type="EC" id="2.7.11.1"/>
    </reaction>
</comment>
<comment type="subunit">
    <text evidence="1">Monomer.</text>
</comment>
<comment type="subcellular location">
    <subcellularLocation>
        <location>Cytoplasm</location>
    </subcellularLocation>
</comment>
<comment type="PTM">
    <text>Autophosphorylated.</text>
</comment>
<comment type="similarity">
    <text evidence="6">Belongs to the protein kinase superfamily. CK1 Ser/Thr protein kinase family. Casein kinase I subfamily.</text>
</comment>
<dbReference type="EC" id="2.7.11.1"/>
<dbReference type="EMBL" id="U22296">
    <property type="protein sequence ID" value="AAC52200.1"/>
    <property type="molecule type" value="mRNA"/>
</dbReference>
<dbReference type="EMBL" id="BC078831">
    <property type="protein sequence ID" value="AAH78831.1"/>
    <property type="molecule type" value="mRNA"/>
</dbReference>
<dbReference type="PIR" id="A56711">
    <property type="entry name" value="A56711"/>
</dbReference>
<dbReference type="RefSeq" id="NP_001418558.1">
    <property type="nucleotide sequence ID" value="NM_001431629.1"/>
</dbReference>
<dbReference type="RefSeq" id="NP_071624.1">
    <property type="nucleotide sequence ID" value="NM_022288.3"/>
</dbReference>
<dbReference type="RefSeq" id="XP_017451381.1">
    <property type="nucleotide sequence ID" value="XM_017595892.1"/>
</dbReference>
<dbReference type="SMR" id="Q62761"/>
<dbReference type="BioGRID" id="248970">
    <property type="interactions" value="1"/>
</dbReference>
<dbReference type="FunCoup" id="Q62761">
    <property type="interactions" value="3511"/>
</dbReference>
<dbReference type="STRING" id="10116.ENSRNOP00000074148"/>
<dbReference type="PhosphoSitePlus" id="Q62761"/>
<dbReference type="SwissPalm" id="Q62761"/>
<dbReference type="PaxDb" id="10116-ENSRNOP00000048274"/>
<dbReference type="Ensembl" id="ENSRNOT00000042369.4">
    <property type="protein sequence ID" value="ENSRNOP00000048274.2"/>
    <property type="gene ID" value="ENSRNOG00000016620.7"/>
</dbReference>
<dbReference type="GeneID" id="64086"/>
<dbReference type="KEGG" id="rno:64086"/>
<dbReference type="UCSC" id="RGD:621404">
    <property type="organism name" value="rat"/>
</dbReference>
<dbReference type="AGR" id="RGD:621404"/>
<dbReference type="CTD" id="53944"/>
<dbReference type="RGD" id="621404">
    <property type="gene designation" value="Csnk1g1"/>
</dbReference>
<dbReference type="eggNOG" id="KOG1165">
    <property type="taxonomic scope" value="Eukaryota"/>
</dbReference>
<dbReference type="GeneTree" id="ENSGT00940000155628"/>
<dbReference type="HOGENOM" id="CLU_019279_2_0_1"/>
<dbReference type="InParanoid" id="Q62761"/>
<dbReference type="BRENDA" id="2.7.11.1">
    <property type="organism ID" value="5301"/>
</dbReference>
<dbReference type="PRO" id="PR:Q62761"/>
<dbReference type="Proteomes" id="UP000002494">
    <property type="component" value="Chromosome 8"/>
</dbReference>
<dbReference type="Bgee" id="ENSRNOG00000016620">
    <property type="expression patterns" value="Expressed in testis and 18 other cell types or tissues"/>
</dbReference>
<dbReference type="ExpressionAtlas" id="Q62761">
    <property type="expression patterns" value="baseline and differential"/>
</dbReference>
<dbReference type="GO" id="GO:0005737">
    <property type="term" value="C:cytoplasm"/>
    <property type="evidence" value="ECO:0000318"/>
    <property type="project" value="GO_Central"/>
</dbReference>
<dbReference type="GO" id="GO:0005634">
    <property type="term" value="C:nucleus"/>
    <property type="evidence" value="ECO:0000318"/>
    <property type="project" value="GO_Central"/>
</dbReference>
<dbReference type="GO" id="GO:0005886">
    <property type="term" value="C:plasma membrane"/>
    <property type="evidence" value="ECO:0000318"/>
    <property type="project" value="GO_Central"/>
</dbReference>
<dbReference type="GO" id="GO:0005524">
    <property type="term" value="F:ATP binding"/>
    <property type="evidence" value="ECO:0007669"/>
    <property type="project" value="UniProtKB-KW"/>
</dbReference>
<dbReference type="GO" id="GO:0106310">
    <property type="term" value="F:protein serine kinase activity"/>
    <property type="evidence" value="ECO:0007669"/>
    <property type="project" value="RHEA"/>
</dbReference>
<dbReference type="GO" id="GO:0004674">
    <property type="term" value="F:protein serine/threonine kinase activity"/>
    <property type="evidence" value="ECO:0000314"/>
    <property type="project" value="RGD"/>
</dbReference>
<dbReference type="GO" id="GO:0006897">
    <property type="term" value="P:endocytosis"/>
    <property type="evidence" value="ECO:0000318"/>
    <property type="project" value="GO_Central"/>
</dbReference>
<dbReference type="GO" id="GO:0090263">
    <property type="term" value="P:positive regulation of canonical Wnt signaling pathway"/>
    <property type="evidence" value="ECO:0000318"/>
    <property type="project" value="GO_Central"/>
</dbReference>
<dbReference type="GO" id="GO:0007165">
    <property type="term" value="P:signal transduction"/>
    <property type="evidence" value="ECO:0000318"/>
    <property type="project" value="GO_Central"/>
</dbReference>
<dbReference type="GO" id="GO:0016055">
    <property type="term" value="P:Wnt signaling pathway"/>
    <property type="evidence" value="ECO:0007669"/>
    <property type="project" value="UniProtKB-KW"/>
</dbReference>
<dbReference type="CDD" id="cd14126">
    <property type="entry name" value="STKc_CK1_gamma"/>
    <property type="match status" value="1"/>
</dbReference>
<dbReference type="FunFam" id="1.10.510.10:FF:001113">
    <property type="entry name" value="Casein kinase 1 gamma 2"/>
    <property type="match status" value="1"/>
</dbReference>
<dbReference type="FunFam" id="3.30.200.20:FF:000018">
    <property type="entry name" value="Casein kinase I isoform gamma-1"/>
    <property type="match status" value="1"/>
</dbReference>
<dbReference type="Gene3D" id="3.30.200.20">
    <property type="entry name" value="Phosphorylase Kinase, domain 1"/>
    <property type="match status" value="1"/>
</dbReference>
<dbReference type="Gene3D" id="1.10.510.10">
    <property type="entry name" value="Transferase(Phosphotransferase) domain 1"/>
    <property type="match status" value="1"/>
</dbReference>
<dbReference type="InterPro" id="IPR022247">
    <property type="entry name" value="Casein_kinase-1_gamma_C"/>
</dbReference>
<dbReference type="InterPro" id="IPR050235">
    <property type="entry name" value="CK1_Ser-Thr_kinase"/>
</dbReference>
<dbReference type="InterPro" id="IPR011009">
    <property type="entry name" value="Kinase-like_dom_sf"/>
</dbReference>
<dbReference type="InterPro" id="IPR000719">
    <property type="entry name" value="Prot_kinase_dom"/>
</dbReference>
<dbReference type="InterPro" id="IPR017441">
    <property type="entry name" value="Protein_kinase_ATP_BS"/>
</dbReference>
<dbReference type="InterPro" id="IPR008271">
    <property type="entry name" value="Ser/Thr_kinase_AS"/>
</dbReference>
<dbReference type="PANTHER" id="PTHR11909">
    <property type="entry name" value="CASEIN KINASE-RELATED"/>
    <property type="match status" value="1"/>
</dbReference>
<dbReference type="Pfam" id="PF12605">
    <property type="entry name" value="CK1gamma_C"/>
    <property type="match status" value="1"/>
</dbReference>
<dbReference type="Pfam" id="PF00069">
    <property type="entry name" value="Pkinase"/>
    <property type="match status" value="1"/>
</dbReference>
<dbReference type="SMART" id="SM00220">
    <property type="entry name" value="S_TKc"/>
    <property type="match status" value="1"/>
</dbReference>
<dbReference type="SUPFAM" id="SSF56112">
    <property type="entry name" value="Protein kinase-like (PK-like)"/>
    <property type="match status" value="1"/>
</dbReference>
<dbReference type="PROSITE" id="PS00107">
    <property type="entry name" value="PROTEIN_KINASE_ATP"/>
    <property type="match status" value="1"/>
</dbReference>
<dbReference type="PROSITE" id="PS50011">
    <property type="entry name" value="PROTEIN_KINASE_DOM"/>
    <property type="match status" value="1"/>
</dbReference>
<dbReference type="PROSITE" id="PS00108">
    <property type="entry name" value="PROTEIN_KINASE_ST"/>
    <property type="match status" value="1"/>
</dbReference>
<proteinExistence type="evidence at transcript level"/>
<reference key="1">
    <citation type="journal article" date="1995" name="J. Biol. Chem.">
        <title>Casein kinase I gamma subfamily. Molecular cloning, expression, and characterization of three mammalian isoforms and complementation of defects in the Saccharomyces cerevisiae YCK genes.</title>
        <authorList>
            <person name="Zhai L."/>
            <person name="Graves P.R."/>
            <person name="Robinson L.C."/>
            <person name="Italiano M."/>
            <person name="Culbertson M.R."/>
            <person name="Rowles J."/>
            <person name="Cobb M.H."/>
            <person name="Depaoli-Roach A.A."/>
            <person name="Roach P.J."/>
        </authorList>
    </citation>
    <scope>NUCLEOTIDE SEQUENCE [MRNA]</scope>
    <source>
        <tissue>Testis</tissue>
    </source>
</reference>
<reference key="2">
    <citation type="journal article" date="2004" name="Genome Res.">
        <title>The status, quality, and expansion of the NIH full-length cDNA project: the Mammalian Gene Collection (MGC).</title>
        <authorList>
            <consortium name="The MGC Project Team"/>
        </authorList>
    </citation>
    <scope>NUCLEOTIDE SEQUENCE [LARGE SCALE MRNA]</scope>
    <source>
        <tissue>Testis</tissue>
    </source>
</reference>
<feature type="chain" id="PRO_0000192841" description="Casein kinase I isoform gamma-1">
    <location>
        <begin position="1"/>
        <end position="390"/>
    </location>
</feature>
<feature type="domain" description="Protein kinase" evidence="3">
    <location>
        <begin position="44"/>
        <end position="315"/>
    </location>
</feature>
<feature type="region of interest" description="Disordered" evidence="5">
    <location>
        <begin position="1"/>
        <end position="34"/>
    </location>
</feature>
<feature type="compositionally biased region" description="Basic and acidic residues" evidence="5">
    <location>
        <begin position="1"/>
        <end position="13"/>
    </location>
</feature>
<feature type="compositionally biased region" description="Polar residues" evidence="5">
    <location>
        <begin position="15"/>
        <end position="34"/>
    </location>
</feature>
<feature type="active site" description="Proton acceptor" evidence="3 4">
    <location>
        <position position="164"/>
    </location>
</feature>
<feature type="binding site" evidence="3">
    <location>
        <begin position="50"/>
        <end position="58"/>
    </location>
    <ligand>
        <name>ATP</name>
        <dbReference type="ChEBI" id="CHEBI:30616"/>
    </ligand>
</feature>
<feature type="binding site" evidence="3">
    <location>
        <position position="73"/>
    </location>
    <ligand>
        <name>ATP</name>
        <dbReference type="ChEBI" id="CHEBI:30616"/>
    </ligand>
</feature>
<feature type="modified residue" description="Phosphoserine" evidence="2">
    <location>
        <position position="344"/>
    </location>
</feature>
<name>KC1G1_RAT</name>
<gene>
    <name type="primary">Csnk1g1</name>
</gene>
<organism>
    <name type="scientific">Rattus norvegicus</name>
    <name type="common">Rat</name>
    <dbReference type="NCBI Taxonomy" id="10116"/>
    <lineage>
        <taxon>Eukaryota</taxon>
        <taxon>Metazoa</taxon>
        <taxon>Chordata</taxon>
        <taxon>Craniata</taxon>
        <taxon>Vertebrata</taxon>
        <taxon>Euteleostomi</taxon>
        <taxon>Mammalia</taxon>
        <taxon>Eutheria</taxon>
        <taxon>Euarchontoglires</taxon>
        <taxon>Glires</taxon>
        <taxon>Rodentia</taxon>
        <taxon>Myomorpha</taxon>
        <taxon>Muroidea</taxon>
        <taxon>Muridae</taxon>
        <taxon>Murinae</taxon>
        <taxon>Rattus</taxon>
    </lineage>
</organism>
<keyword id="KW-0067">ATP-binding</keyword>
<keyword id="KW-0963">Cytoplasm</keyword>
<keyword id="KW-0418">Kinase</keyword>
<keyword id="KW-0547">Nucleotide-binding</keyword>
<keyword id="KW-0597">Phosphoprotein</keyword>
<keyword id="KW-1185">Reference proteome</keyword>
<keyword id="KW-0723">Serine/threonine-protein kinase</keyword>
<keyword id="KW-0808">Transferase</keyword>
<keyword id="KW-0879">Wnt signaling pathway</keyword>
<protein>
    <recommendedName>
        <fullName>Casein kinase I isoform gamma-1</fullName>
        <shortName>CKI-gamma 1</shortName>
        <ecNumber>2.7.11.1</ecNumber>
    </recommendedName>
</protein>